<feature type="chain" id="PRO_0000194427" description="Pantothenate kinase">
    <location>
        <begin position="1"/>
        <end position="316"/>
    </location>
</feature>
<feature type="binding site" evidence="2">
    <location>
        <begin position="95"/>
        <end position="102"/>
    </location>
    <ligand>
        <name>ATP</name>
        <dbReference type="ChEBI" id="CHEBI:30616"/>
    </ligand>
</feature>
<accession>P0A6I4</accession>
<accession>P15044</accession>
<dbReference type="EC" id="2.7.1.33"/>
<dbReference type="EMBL" id="AE014075">
    <property type="protein sequence ID" value="AAN83361.1"/>
    <property type="status" value="ALT_INIT"/>
    <property type="molecule type" value="Genomic_DNA"/>
</dbReference>
<dbReference type="RefSeq" id="WP_000023081.1">
    <property type="nucleotide sequence ID" value="NZ_CP051263.1"/>
</dbReference>
<dbReference type="SMR" id="P0A6I4"/>
<dbReference type="STRING" id="199310.c4933"/>
<dbReference type="GeneID" id="93777919"/>
<dbReference type="KEGG" id="ecc:c4933"/>
<dbReference type="eggNOG" id="COG1072">
    <property type="taxonomic scope" value="Bacteria"/>
</dbReference>
<dbReference type="HOGENOM" id="CLU_053818_1_1_6"/>
<dbReference type="UniPathway" id="UPA00241">
    <property type="reaction ID" value="UER00352"/>
</dbReference>
<dbReference type="Proteomes" id="UP000001410">
    <property type="component" value="Chromosome"/>
</dbReference>
<dbReference type="GO" id="GO:0005737">
    <property type="term" value="C:cytoplasm"/>
    <property type="evidence" value="ECO:0007669"/>
    <property type="project" value="UniProtKB-SubCell"/>
</dbReference>
<dbReference type="GO" id="GO:0005524">
    <property type="term" value="F:ATP binding"/>
    <property type="evidence" value="ECO:0007669"/>
    <property type="project" value="UniProtKB-UniRule"/>
</dbReference>
<dbReference type="GO" id="GO:0004594">
    <property type="term" value="F:pantothenate kinase activity"/>
    <property type="evidence" value="ECO:0007669"/>
    <property type="project" value="UniProtKB-UniRule"/>
</dbReference>
<dbReference type="GO" id="GO:0015937">
    <property type="term" value="P:coenzyme A biosynthetic process"/>
    <property type="evidence" value="ECO:0007669"/>
    <property type="project" value="UniProtKB-UniRule"/>
</dbReference>
<dbReference type="CDD" id="cd02025">
    <property type="entry name" value="PanK"/>
    <property type="match status" value="1"/>
</dbReference>
<dbReference type="FunFam" id="3.40.50.300:FF:000242">
    <property type="entry name" value="Pantothenate kinase"/>
    <property type="match status" value="1"/>
</dbReference>
<dbReference type="Gene3D" id="3.40.50.300">
    <property type="entry name" value="P-loop containing nucleotide triphosphate hydrolases"/>
    <property type="match status" value="1"/>
</dbReference>
<dbReference type="HAMAP" id="MF_00215">
    <property type="entry name" value="Pantothen_kinase_1"/>
    <property type="match status" value="1"/>
</dbReference>
<dbReference type="InterPro" id="IPR027417">
    <property type="entry name" value="P-loop_NTPase"/>
</dbReference>
<dbReference type="InterPro" id="IPR004566">
    <property type="entry name" value="PanK"/>
</dbReference>
<dbReference type="InterPro" id="IPR006083">
    <property type="entry name" value="PRK/URK"/>
</dbReference>
<dbReference type="NCBIfam" id="TIGR00554">
    <property type="entry name" value="panK_bact"/>
    <property type="match status" value="1"/>
</dbReference>
<dbReference type="PANTHER" id="PTHR10285">
    <property type="entry name" value="URIDINE KINASE"/>
    <property type="match status" value="1"/>
</dbReference>
<dbReference type="Pfam" id="PF00485">
    <property type="entry name" value="PRK"/>
    <property type="match status" value="1"/>
</dbReference>
<dbReference type="PIRSF" id="PIRSF000545">
    <property type="entry name" value="Pantothenate_kin"/>
    <property type="match status" value="1"/>
</dbReference>
<dbReference type="SUPFAM" id="SSF52540">
    <property type="entry name" value="P-loop containing nucleoside triphosphate hydrolases"/>
    <property type="match status" value="1"/>
</dbReference>
<comment type="catalytic activity">
    <reaction>
        <text>(R)-pantothenate + ATP = (R)-4'-phosphopantothenate + ADP + H(+)</text>
        <dbReference type="Rhea" id="RHEA:16373"/>
        <dbReference type="ChEBI" id="CHEBI:10986"/>
        <dbReference type="ChEBI" id="CHEBI:15378"/>
        <dbReference type="ChEBI" id="CHEBI:29032"/>
        <dbReference type="ChEBI" id="CHEBI:30616"/>
        <dbReference type="ChEBI" id="CHEBI:456216"/>
        <dbReference type="EC" id="2.7.1.33"/>
    </reaction>
</comment>
<comment type="pathway">
    <text>Cofactor biosynthesis; coenzyme A biosynthesis; CoA from (R)-pantothenate: step 1/5.</text>
</comment>
<comment type="subcellular location">
    <subcellularLocation>
        <location evidence="1">Cytoplasm</location>
    </subcellularLocation>
</comment>
<comment type="similarity">
    <text evidence="3">Belongs to the prokaryotic pantothenate kinase family.</text>
</comment>
<comment type="sequence caution" evidence="3">
    <conflict type="erroneous initiation">
        <sequence resource="EMBL-CDS" id="AAN83361"/>
    </conflict>
</comment>
<organism>
    <name type="scientific">Escherichia coli O6:H1 (strain CFT073 / ATCC 700928 / UPEC)</name>
    <dbReference type="NCBI Taxonomy" id="199310"/>
    <lineage>
        <taxon>Bacteria</taxon>
        <taxon>Pseudomonadati</taxon>
        <taxon>Pseudomonadota</taxon>
        <taxon>Gammaproteobacteria</taxon>
        <taxon>Enterobacterales</taxon>
        <taxon>Enterobacteriaceae</taxon>
        <taxon>Escherichia</taxon>
    </lineage>
</organism>
<proteinExistence type="inferred from homology"/>
<keyword id="KW-0067">ATP-binding</keyword>
<keyword id="KW-0173">Coenzyme A biosynthesis</keyword>
<keyword id="KW-0963">Cytoplasm</keyword>
<keyword id="KW-0418">Kinase</keyword>
<keyword id="KW-0547">Nucleotide-binding</keyword>
<keyword id="KW-1185">Reference proteome</keyword>
<keyword id="KW-0808">Transferase</keyword>
<evidence type="ECO:0000250" key="1"/>
<evidence type="ECO:0000255" key="2"/>
<evidence type="ECO:0000305" key="3"/>
<protein>
    <recommendedName>
        <fullName>Pantothenate kinase</fullName>
        <ecNumber>2.7.1.33</ecNumber>
    </recommendedName>
    <alternativeName>
        <fullName>Pantothenic acid kinase</fullName>
    </alternativeName>
</protein>
<reference key="1">
    <citation type="journal article" date="2002" name="Proc. Natl. Acad. Sci. U.S.A.">
        <title>Extensive mosaic structure revealed by the complete genome sequence of uropathogenic Escherichia coli.</title>
        <authorList>
            <person name="Welch R.A."/>
            <person name="Burland V."/>
            <person name="Plunkett G. III"/>
            <person name="Redford P."/>
            <person name="Roesch P."/>
            <person name="Rasko D."/>
            <person name="Buckles E.L."/>
            <person name="Liou S.-R."/>
            <person name="Boutin A."/>
            <person name="Hackett J."/>
            <person name="Stroud D."/>
            <person name="Mayhew G.F."/>
            <person name="Rose D.J."/>
            <person name="Zhou S."/>
            <person name="Schwartz D.C."/>
            <person name="Perna N.T."/>
            <person name="Mobley H.L.T."/>
            <person name="Donnenberg M.S."/>
            <person name="Blattner F.R."/>
        </authorList>
    </citation>
    <scope>NUCLEOTIDE SEQUENCE [LARGE SCALE GENOMIC DNA]</scope>
    <source>
        <strain>CFT073 / ATCC 700928 / UPEC</strain>
    </source>
</reference>
<name>COAA_ECOL6</name>
<gene>
    <name type="primary">coaA</name>
    <name type="synonym">panK</name>
    <name type="synonym">rts</name>
    <name type="ordered locus">c4933</name>
</gene>
<sequence>MSIKEQTLMTPYLQFDRNQWAALRDSVPMTLSEDEIARLKGINEDLSLEEVAEIYLPLSRLLNFYISSNLRRQAVLEQFLGTNGQRIPYIISIAGSVAVGKSTTARVLQALLSRWPEHRRVELITTDGFLHPNQVLKERGLMKKKGFPESYDMHRLVKFVSDLKSGVPNVTAPVYSHLIYDVIPDGDKTVVQPDILILEGLNVLQSGMDYPHDPHHVFVSDFVDFSIYVDAPEDLLQTWYINRFLKFREGAFTDPDSYFHNYAKLTKEEAIKTAMTLWKEINWLNLKQNILPTRERASLILTKSANHAVEEVRLRK</sequence>